<sequence>MSAPLSLFVTGTDTEIGKTFVSAALLHGFARAGLRAAAMKPVAAGAYERDGAWRNEDADQLDAAANVALPAAIRTPFLLKAPAAPHIVAAREGVALDIGTIVDAHRRACEMADVIVVEGVGGVRVPLADTRDTADLAVALGLPVVLVVGVRLGCISHALLTAEAIAARGLPLAGWVANRIDPAMPFADDNIDTLRAWLEREHRAPLLGALAHMSPPSPDAASHALDVNLLLNALRAAAPR</sequence>
<proteinExistence type="inferred from homology"/>
<evidence type="ECO:0000255" key="1">
    <source>
        <dbReference type="HAMAP-Rule" id="MF_00336"/>
    </source>
</evidence>
<organism>
    <name type="scientific">Burkholderia mallei (strain NCTC 10247)</name>
    <dbReference type="NCBI Taxonomy" id="320389"/>
    <lineage>
        <taxon>Bacteria</taxon>
        <taxon>Pseudomonadati</taxon>
        <taxon>Pseudomonadota</taxon>
        <taxon>Betaproteobacteria</taxon>
        <taxon>Burkholderiales</taxon>
        <taxon>Burkholderiaceae</taxon>
        <taxon>Burkholderia</taxon>
        <taxon>pseudomallei group</taxon>
    </lineage>
</organism>
<accession>A3MNG2</accession>
<protein>
    <recommendedName>
        <fullName evidence="1">ATP-dependent dethiobiotin synthetase BioD</fullName>
        <ecNumber evidence="1">6.3.3.3</ecNumber>
    </recommendedName>
    <alternativeName>
        <fullName evidence="1">DTB synthetase</fullName>
        <shortName evidence="1">DTBS</shortName>
    </alternativeName>
    <alternativeName>
        <fullName evidence="1">Dethiobiotin synthase</fullName>
    </alternativeName>
</protein>
<comment type="function">
    <text evidence="1">Catalyzes a mechanistically unusual reaction, the ATP-dependent insertion of CO2 between the N7 and N8 nitrogen atoms of 7,8-diaminopelargonic acid (DAPA, also called 7,8-diammoniononanoate) to form a ureido ring.</text>
</comment>
<comment type="catalytic activity">
    <reaction evidence="1">
        <text>(7R,8S)-7,8-diammoniononanoate + CO2 + ATP = (4R,5S)-dethiobiotin + ADP + phosphate + 3 H(+)</text>
        <dbReference type="Rhea" id="RHEA:15805"/>
        <dbReference type="ChEBI" id="CHEBI:15378"/>
        <dbReference type="ChEBI" id="CHEBI:16526"/>
        <dbReference type="ChEBI" id="CHEBI:30616"/>
        <dbReference type="ChEBI" id="CHEBI:43474"/>
        <dbReference type="ChEBI" id="CHEBI:149469"/>
        <dbReference type="ChEBI" id="CHEBI:149473"/>
        <dbReference type="ChEBI" id="CHEBI:456216"/>
        <dbReference type="EC" id="6.3.3.3"/>
    </reaction>
</comment>
<comment type="cofactor">
    <cofactor evidence="1">
        <name>Mg(2+)</name>
        <dbReference type="ChEBI" id="CHEBI:18420"/>
    </cofactor>
</comment>
<comment type="pathway">
    <text evidence="1">Cofactor biosynthesis; biotin biosynthesis; biotin from 7,8-diaminononanoate: step 1/2.</text>
</comment>
<comment type="subunit">
    <text evidence="1">Homodimer.</text>
</comment>
<comment type="subcellular location">
    <subcellularLocation>
        <location evidence="1">Cytoplasm</location>
    </subcellularLocation>
</comment>
<comment type="similarity">
    <text evidence="1">Belongs to the dethiobiotin synthetase family.</text>
</comment>
<name>BIOD_BURM7</name>
<dbReference type="EC" id="6.3.3.3" evidence="1"/>
<dbReference type="EMBL" id="CP000548">
    <property type="protein sequence ID" value="ABO06105.1"/>
    <property type="molecule type" value="Genomic_DNA"/>
</dbReference>
<dbReference type="RefSeq" id="WP_004189380.1">
    <property type="nucleotide sequence ID" value="NZ_CP007802.1"/>
</dbReference>
<dbReference type="SMR" id="A3MNG2"/>
<dbReference type="GeneID" id="92977885"/>
<dbReference type="KEGG" id="bmaz:BM44_983"/>
<dbReference type="KEGG" id="bmn:BMA10247_2270"/>
<dbReference type="PATRIC" id="fig|320389.8.peg.1092"/>
<dbReference type="UniPathway" id="UPA00078">
    <property type="reaction ID" value="UER00161"/>
</dbReference>
<dbReference type="GO" id="GO:0005829">
    <property type="term" value="C:cytosol"/>
    <property type="evidence" value="ECO:0007669"/>
    <property type="project" value="TreeGrafter"/>
</dbReference>
<dbReference type="GO" id="GO:0005524">
    <property type="term" value="F:ATP binding"/>
    <property type="evidence" value="ECO:0007669"/>
    <property type="project" value="UniProtKB-UniRule"/>
</dbReference>
<dbReference type="GO" id="GO:0004141">
    <property type="term" value="F:dethiobiotin synthase activity"/>
    <property type="evidence" value="ECO:0007669"/>
    <property type="project" value="UniProtKB-UniRule"/>
</dbReference>
<dbReference type="GO" id="GO:0000287">
    <property type="term" value="F:magnesium ion binding"/>
    <property type="evidence" value="ECO:0007669"/>
    <property type="project" value="UniProtKB-UniRule"/>
</dbReference>
<dbReference type="GO" id="GO:0009102">
    <property type="term" value="P:biotin biosynthetic process"/>
    <property type="evidence" value="ECO:0007669"/>
    <property type="project" value="UniProtKB-UniRule"/>
</dbReference>
<dbReference type="CDD" id="cd03109">
    <property type="entry name" value="DTBS"/>
    <property type="match status" value="1"/>
</dbReference>
<dbReference type="FunFam" id="3.40.50.300:FF:000292">
    <property type="entry name" value="ATP-dependent dethiobiotin synthetase BioD"/>
    <property type="match status" value="1"/>
</dbReference>
<dbReference type="Gene3D" id="3.40.50.300">
    <property type="entry name" value="P-loop containing nucleotide triphosphate hydrolases"/>
    <property type="match status" value="1"/>
</dbReference>
<dbReference type="HAMAP" id="MF_00336">
    <property type="entry name" value="BioD"/>
    <property type="match status" value="1"/>
</dbReference>
<dbReference type="InterPro" id="IPR004472">
    <property type="entry name" value="DTB_synth_BioD"/>
</dbReference>
<dbReference type="InterPro" id="IPR027417">
    <property type="entry name" value="P-loop_NTPase"/>
</dbReference>
<dbReference type="NCBIfam" id="TIGR00347">
    <property type="entry name" value="bioD"/>
    <property type="match status" value="1"/>
</dbReference>
<dbReference type="PANTHER" id="PTHR43210">
    <property type="entry name" value="DETHIOBIOTIN SYNTHETASE"/>
    <property type="match status" value="1"/>
</dbReference>
<dbReference type="PANTHER" id="PTHR43210:SF5">
    <property type="entry name" value="DETHIOBIOTIN SYNTHETASE"/>
    <property type="match status" value="1"/>
</dbReference>
<dbReference type="Pfam" id="PF13500">
    <property type="entry name" value="AAA_26"/>
    <property type="match status" value="1"/>
</dbReference>
<dbReference type="PIRSF" id="PIRSF006755">
    <property type="entry name" value="DTB_synth"/>
    <property type="match status" value="1"/>
</dbReference>
<dbReference type="SUPFAM" id="SSF52540">
    <property type="entry name" value="P-loop containing nucleoside triphosphate hydrolases"/>
    <property type="match status" value="1"/>
</dbReference>
<keyword id="KW-0067">ATP-binding</keyword>
<keyword id="KW-0093">Biotin biosynthesis</keyword>
<keyword id="KW-0963">Cytoplasm</keyword>
<keyword id="KW-0436">Ligase</keyword>
<keyword id="KW-0460">Magnesium</keyword>
<keyword id="KW-0479">Metal-binding</keyword>
<keyword id="KW-0547">Nucleotide-binding</keyword>
<feature type="chain" id="PRO_1000019550" description="ATP-dependent dethiobiotin synthetase BioD">
    <location>
        <begin position="1"/>
        <end position="240"/>
    </location>
</feature>
<feature type="active site" evidence="1">
    <location>
        <position position="40"/>
    </location>
</feature>
<feature type="binding site" evidence="1">
    <location>
        <begin position="15"/>
        <end position="20"/>
    </location>
    <ligand>
        <name>ATP</name>
        <dbReference type="ChEBI" id="CHEBI:30616"/>
    </ligand>
</feature>
<feature type="binding site" evidence="1">
    <location>
        <position position="19"/>
    </location>
    <ligand>
        <name>Mg(2+)</name>
        <dbReference type="ChEBI" id="CHEBI:18420"/>
    </ligand>
</feature>
<feature type="binding site" evidence="1">
    <location>
        <position position="57"/>
    </location>
    <ligand>
        <name>ATP</name>
        <dbReference type="ChEBI" id="CHEBI:30616"/>
    </ligand>
</feature>
<feature type="binding site" evidence="1">
    <location>
        <position position="57"/>
    </location>
    <ligand>
        <name>Mg(2+)</name>
        <dbReference type="ChEBI" id="CHEBI:18420"/>
    </ligand>
</feature>
<feature type="binding site" evidence="1">
    <location>
        <begin position="118"/>
        <end position="121"/>
    </location>
    <ligand>
        <name>ATP</name>
        <dbReference type="ChEBI" id="CHEBI:30616"/>
    </ligand>
</feature>
<feature type="binding site" evidence="1">
    <location>
        <position position="118"/>
    </location>
    <ligand>
        <name>Mg(2+)</name>
        <dbReference type="ChEBI" id="CHEBI:18420"/>
    </ligand>
</feature>
<feature type="binding site" evidence="1">
    <location>
        <begin position="178"/>
        <end position="179"/>
    </location>
    <ligand>
        <name>ATP</name>
        <dbReference type="ChEBI" id="CHEBI:30616"/>
    </ligand>
</feature>
<reference key="1">
    <citation type="journal article" date="2010" name="Genome Biol. Evol.">
        <title>Continuing evolution of Burkholderia mallei through genome reduction and large-scale rearrangements.</title>
        <authorList>
            <person name="Losada L."/>
            <person name="Ronning C.M."/>
            <person name="DeShazer D."/>
            <person name="Woods D."/>
            <person name="Fedorova N."/>
            <person name="Kim H.S."/>
            <person name="Shabalina S.A."/>
            <person name="Pearson T.R."/>
            <person name="Brinkac L."/>
            <person name="Tan P."/>
            <person name="Nandi T."/>
            <person name="Crabtree J."/>
            <person name="Badger J."/>
            <person name="Beckstrom-Sternberg S."/>
            <person name="Saqib M."/>
            <person name="Schutzer S.E."/>
            <person name="Keim P."/>
            <person name="Nierman W.C."/>
        </authorList>
    </citation>
    <scope>NUCLEOTIDE SEQUENCE [LARGE SCALE GENOMIC DNA]</scope>
    <source>
        <strain>NCTC 10247</strain>
    </source>
</reference>
<gene>
    <name evidence="1" type="primary">bioD</name>
    <name type="ordered locus">BMA10247_2270</name>
</gene>